<protein>
    <recommendedName>
        <fullName>GATA factor SREP</fullName>
    </recommendedName>
</protein>
<accession>Q92259</accession>
<dbReference type="EMBL" id="U48414">
    <property type="protein sequence ID" value="AAC49628.1"/>
    <property type="molecule type" value="Genomic_DNA"/>
</dbReference>
<dbReference type="PIR" id="JC6170">
    <property type="entry name" value="JC6170"/>
</dbReference>
<dbReference type="SMR" id="Q92259"/>
<dbReference type="OMA" id="CYRPTTM"/>
<dbReference type="PhylomeDB" id="Q92259"/>
<dbReference type="GO" id="GO:0005634">
    <property type="term" value="C:nucleus"/>
    <property type="evidence" value="ECO:0007669"/>
    <property type="project" value="UniProtKB-SubCell"/>
</dbReference>
<dbReference type="GO" id="GO:0000981">
    <property type="term" value="F:DNA-binding transcription factor activity, RNA polymerase II-specific"/>
    <property type="evidence" value="ECO:0007669"/>
    <property type="project" value="TreeGrafter"/>
</dbReference>
<dbReference type="GO" id="GO:0000978">
    <property type="term" value="F:RNA polymerase II cis-regulatory region sequence-specific DNA binding"/>
    <property type="evidence" value="ECO:0007669"/>
    <property type="project" value="TreeGrafter"/>
</dbReference>
<dbReference type="GO" id="GO:0008270">
    <property type="term" value="F:zinc ion binding"/>
    <property type="evidence" value="ECO:0007669"/>
    <property type="project" value="UniProtKB-KW"/>
</dbReference>
<dbReference type="GO" id="GO:0000122">
    <property type="term" value="P:negative regulation of transcription by RNA polymerase II"/>
    <property type="evidence" value="ECO:0007669"/>
    <property type="project" value="TreeGrafter"/>
</dbReference>
<dbReference type="GO" id="GO:0045944">
    <property type="term" value="P:positive regulation of transcription by RNA polymerase II"/>
    <property type="evidence" value="ECO:0007669"/>
    <property type="project" value="TreeGrafter"/>
</dbReference>
<dbReference type="CDD" id="cd00202">
    <property type="entry name" value="ZnF_GATA"/>
    <property type="match status" value="2"/>
</dbReference>
<dbReference type="FunFam" id="3.30.50.10:FF:000007">
    <property type="entry name" value="Nitrogen regulatory AreA, N-terminal"/>
    <property type="match status" value="1"/>
</dbReference>
<dbReference type="FunFam" id="3.30.50.10:FF:000039">
    <property type="entry name" value="Siderophore transcription factor SreA"/>
    <property type="match status" value="1"/>
</dbReference>
<dbReference type="Gene3D" id="3.30.50.10">
    <property type="entry name" value="Erythroid Transcription Factor GATA-1, subunit A"/>
    <property type="match status" value="2"/>
</dbReference>
<dbReference type="InterPro" id="IPR039355">
    <property type="entry name" value="Transcription_factor_GATA"/>
</dbReference>
<dbReference type="InterPro" id="IPR000679">
    <property type="entry name" value="Znf_GATA"/>
</dbReference>
<dbReference type="InterPro" id="IPR013088">
    <property type="entry name" value="Znf_NHR/GATA"/>
</dbReference>
<dbReference type="PANTHER" id="PTHR10071:SF281">
    <property type="entry name" value="BOX A-BINDING FACTOR-RELATED"/>
    <property type="match status" value="1"/>
</dbReference>
<dbReference type="PANTHER" id="PTHR10071">
    <property type="entry name" value="TRANSCRIPTION FACTOR GATA FAMILY MEMBER"/>
    <property type="match status" value="1"/>
</dbReference>
<dbReference type="Pfam" id="PF00320">
    <property type="entry name" value="GATA"/>
    <property type="match status" value="2"/>
</dbReference>
<dbReference type="PRINTS" id="PR00619">
    <property type="entry name" value="GATAZNFINGER"/>
</dbReference>
<dbReference type="SMART" id="SM00401">
    <property type="entry name" value="ZnF_GATA"/>
    <property type="match status" value="2"/>
</dbReference>
<dbReference type="SUPFAM" id="SSF57716">
    <property type="entry name" value="Glucocorticoid receptor-like (DNA-binding domain)"/>
    <property type="match status" value="2"/>
</dbReference>
<dbReference type="PROSITE" id="PS00344">
    <property type="entry name" value="GATA_ZN_FINGER_1"/>
    <property type="match status" value="2"/>
</dbReference>
<dbReference type="PROSITE" id="PS50114">
    <property type="entry name" value="GATA_ZN_FINGER_2"/>
    <property type="match status" value="2"/>
</dbReference>
<organism>
    <name type="scientific">Penicillium chrysogenum</name>
    <name type="common">Penicillium notatum</name>
    <dbReference type="NCBI Taxonomy" id="5076"/>
    <lineage>
        <taxon>Eukaryota</taxon>
        <taxon>Fungi</taxon>
        <taxon>Dikarya</taxon>
        <taxon>Ascomycota</taxon>
        <taxon>Pezizomycotina</taxon>
        <taxon>Eurotiomycetes</taxon>
        <taxon>Eurotiomycetidae</taxon>
        <taxon>Eurotiales</taxon>
        <taxon>Aspergillaceae</taxon>
        <taxon>Penicillium</taxon>
        <taxon>Penicillium chrysogenum species complex</taxon>
    </lineage>
</organism>
<comment type="subcellular location">
    <subcellularLocation>
        <location evidence="3">Nucleus</location>
    </subcellularLocation>
</comment>
<feature type="chain" id="PRO_0000083480" description="GATA factor SREP">
    <location>
        <begin position="1"/>
        <end position="532"/>
    </location>
</feature>
<feature type="zinc finger region" description="GATA-type 1" evidence="1">
    <location>
        <begin position="94"/>
        <end position="118"/>
    </location>
</feature>
<feature type="zinc finger region" description="GATA-type 2" evidence="1">
    <location>
        <begin position="238"/>
        <end position="262"/>
    </location>
</feature>
<feature type="region of interest" description="Disordered" evidence="2">
    <location>
        <begin position="56"/>
        <end position="87"/>
    </location>
</feature>
<feature type="region of interest" description="Disordered" evidence="2">
    <location>
        <begin position="131"/>
        <end position="153"/>
    </location>
</feature>
<feature type="region of interest" description="Disordered" evidence="2">
    <location>
        <begin position="202"/>
        <end position="227"/>
    </location>
</feature>
<feature type="region of interest" description="Disordered" evidence="2">
    <location>
        <begin position="291"/>
        <end position="318"/>
    </location>
</feature>
<feature type="region of interest" description="Disordered" evidence="2">
    <location>
        <begin position="422"/>
        <end position="506"/>
    </location>
</feature>
<feature type="compositionally biased region" description="Polar residues" evidence="2">
    <location>
        <begin position="59"/>
        <end position="87"/>
    </location>
</feature>
<feature type="compositionally biased region" description="Polar residues" evidence="2">
    <location>
        <begin position="295"/>
        <end position="312"/>
    </location>
</feature>
<feature type="compositionally biased region" description="Polar residues" evidence="2">
    <location>
        <begin position="430"/>
        <end position="444"/>
    </location>
</feature>
<feature type="compositionally biased region" description="Polar residues" evidence="2">
    <location>
        <begin position="452"/>
        <end position="462"/>
    </location>
</feature>
<name>SREP_PENCH</name>
<sequence>MLASLPQMEALHSLPRNQVVPMRQPSAEDLDAAQQLISSAQAGREHLADHYREDGMVQRSGQPGSNQWNGHNETPSEKTSPSSQKDTTFLGHSCSNCGTKSTPLWRRSPTGAMICNACGLYLKARNVARPTKRNRMQSEGAEKPPPPASSHCGGSSEGGGCKGSCPGGGSCNGTGGAEGCDGCPAYNNRIYKSATRGAAAIQSSWGRHQAHEPEPATQEETPVKAPAPADASNTLVACQNCGTTVTPLWRRDEQGHPICNACGLYYKLHGCYRPTNMKKSIIKRRKRVVPALRDQSPTAGTLSSNGSSTSPEASPAALAHGHDDHYRYMSSEPGDHYQMMPGKTEDAPRALPFAPPPVDFTGYNVSSVPLAHGPSIPHGLPKLLEVERLGHSPVSQYGRRSVSPNTLNVPKKRTLAEAATEALPAPSTLEAGSNQLPPIMSSANPTPPGRLSSISSILNQSDVRGEPRSDNNLGRPPPIHHSVSPSPHPPQPLPGLASLGDSVDRRARLEREAEQMREMLRAKERELAEMRR</sequence>
<gene>
    <name type="primary">SREP</name>
</gene>
<proteinExistence type="predicted"/>
<evidence type="ECO:0000255" key="1">
    <source>
        <dbReference type="PROSITE-ProRule" id="PRU00094"/>
    </source>
</evidence>
<evidence type="ECO:0000256" key="2">
    <source>
        <dbReference type="SAM" id="MobiDB-lite"/>
    </source>
</evidence>
<evidence type="ECO:0000305" key="3"/>
<keyword id="KW-0238">DNA-binding</keyword>
<keyword id="KW-0479">Metal-binding</keyword>
<keyword id="KW-0539">Nucleus</keyword>
<keyword id="KW-0677">Repeat</keyword>
<keyword id="KW-0804">Transcription</keyword>
<keyword id="KW-0805">Transcription regulation</keyword>
<keyword id="KW-0862">Zinc</keyword>
<keyword id="KW-0863">Zinc-finger</keyword>
<reference key="1">
    <citation type="journal article" date="1997" name="Gene">
        <title>Molecular analysis of a Penicillium chrysogenum GATA factor encoding gene (sreP) exhibiting significant homology to the Ustilago maydis urbs1 gene.</title>
        <authorList>
            <person name="Haas H."/>
            <person name="Angermayr K."/>
            <person name="Stoeffler G."/>
        </authorList>
    </citation>
    <scope>NUCLEOTIDE SEQUENCE [GENOMIC DNA]</scope>
    <source>
        <strain>ATCC 10002 / CBS 277.47 / NBRC 4626 / Wis. Q-176</strain>
    </source>
</reference>